<reference key="1">
    <citation type="submission" date="2001-05" db="EMBL/GenBank/DDBJ databases">
        <title>Avian mago nashi gene.</title>
        <authorList>
            <person name="Ivarie R.D."/>
            <person name="Andacht T.M."/>
        </authorList>
    </citation>
    <scope>NUCLEOTIDE SEQUENCE [MRNA]</scope>
</reference>
<reference key="2">
    <citation type="journal article" date="1996" name="Dev. Dyn.">
        <title>Expression of avian glypican is developmentally regulated.</title>
        <authorList>
            <person name="Shi N."/>
            <person name="Antin P.B."/>
            <person name="Akimoto K."/>
            <person name="Morkin E."/>
        </authorList>
    </citation>
    <scope>NUCLEOTIDE SEQUENCE [GENOMIC DNA] OF 1-20</scope>
    <source>
        <tissue>Heart</tissue>
    </source>
</reference>
<feature type="chain" id="PRO_0000174149" description="Protein mago nashi homolog">
    <location>
        <begin position="1"/>
        <end position="146"/>
    </location>
</feature>
<proteinExistence type="evidence at transcript level"/>
<gene>
    <name type="primary">MAGOH</name>
</gene>
<dbReference type="EMBL" id="AF383945">
    <property type="protein sequence ID" value="AAN76523.1"/>
    <property type="molecule type" value="mRNA"/>
</dbReference>
<dbReference type="EMBL" id="L29089">
    <property type="status" value="NOT_ANNOTATED_CDS"/>
    <property type="molecule type" value="Genomic_DNA"/>
</dbReference>
<dbReference type="RefSeq" id="NP_001383098.1">
    <property type="nucleotide sequence ID" value="NM_001396169.1"/>
</dbReference>
<dbReference type="RefSeq" id="NP_989656.1">
    <property type="nucleotide sequence ID" value="NM_204325.2"/>
</dbReference>
<dbReference type="SMR" id="P50594"/>
<dbReference type="FunCoup" id="P50594">
    <property type="interactions" value="2452"/>
</dbReference>
<dbReference type="STRING" id="9031.ENSGALP00000061989"/>
<dbReference type="PaxDb" id="9031-ENSGALP00000017367"/>
<dbReference type="GeneID" id="374226"/>
<dbReference type="VEuPathDB" id="HostDB:geneid_374226"/>
<dbReference type="eggNOG" id="KOG3392">
    <property type="taxonomic scope" value="Eukaryota"/>
</dbReference>
<dbReference type="HOGENOM" id="CLU_109497_1_1_1"/>
<dbReference type="InParanoid" id="P50594"/>
<dbReference type="OMA" id="IRKEMWI"/>
<dbReference type="OrthoDB" id="6495301at2759"/>
<dbReference type="PhylomeDB" id="P50594"/>
<dbReference type="Proteomes" id="UP000000539">
    <property type="component" value="Unassembled WGS sequence"/>
</dbReference>
<dbReference type="GO" id="GO:0071013">
    <property type="term" value="C:catalytic step 2 spliceosome"/>
    <property type="evidence" value="ECO:0000318"/>
    <property type="project" value="GO_Central"/>
</dbReference>
<dbReference type="GO" id="GO:0005737">
    <property type="term" value="C:cytoplasm"/>
    <property type="evidence" value="ECO:0007669"/>
    <property type="project" value="UniProtKB-SubCell"/>
</dbReference>
<dbReference type="GO" id="GO:0035145">
    <property type="term" value="C:exon-exon junction complex"/>
    <property type="evidence" value="ECO:0000318"/>
    <property type="project" value="GO_Central"/>
</dbReference>
<dbReference type="GO" id="GO:0016607">
    <property type="term" value="C:nuclear speck"/>
    <property type="evidence" value="ECO:0007669"/>
    <property type="project" value="UniProtKB-SubCell"/>
</dbReference>
<dbReference type="GO" id="GO:0003723">
    <property type="term" value="F:RNA binding"/>
    <property type="evidence" value="ECO:0007669"/>
    <property type="project" value="UniProtKB-KW"/>
</dbReference>
<dbReference type="GO" id="GO:0006397">
    <property type="term" value="P:mRNA processing"/>
    <property type="evidence" value="ECO:0007669"/>
    <property type="project" value="UniProtKB-KW"/>
</dbReference>
<dbReference type="GO" id="GO:0051028">
    <property type="term" value="P:mRNA transport"/>
    <property type="evidence" value="ECO:0007669"/>
    <property type="project" value="UniProtKB-KW"/>
</dbReference>
<dbReference type="GO" id="GO:0008380">
    <property type="term" value="P:RNA splicing"/>
    <property type="evidence" value="ECO:0000318"/>
    <property type="project" value="GO_Central"/>
</dbReference>
<dbReference type="CDD" id="cd11295">
    <property type="entry name" value="Mago_nashi"/>
    <property type="match status" value="1"/>
</dbReference>
<dbReference type="FunFam" id="3.30.1560.10:FF:000001">
    <property type="entry name" value="Protein mago nashi homolog"/>
    <property type="match status" value="1"/>
</dbReference>
<dbReference type="Gene3D" id="3.30.1560.10">
    <property type="entry name" value="Mago nashi"/>
    <property type="match status" value="1"/>
</dbReference>
<dbReference type="InterPro" id="IPR004023">
    <property type="entry name" value="Mago_nashi"/>
</dbReference>
<dbReference type="InterPro" id="IPR036605">
    <property type="entry name" value="Mago_nashi_sf"/>
</dbReference>
<dbReference type="PANTHER" id="PTHR12638:SF0">
    <property type="entry name" value="MAGO HOMOLOG, EXON JUNCTION COMPLEX SUBUNIT-RELATED"/>
    <property type="match status" value="1"/>
</dbReference>
<dbReference type="PANTHER" id="PTHR12638">
    <property type="entry name" value="PROTEIN MAGO NASHI HOMOLOG"/>
    <property type="match status" value="1"/>
</dbReference>
<dbReference type="Pfam" id="PF02792">
    <property type="entry name" value="Mago_nashi"/>
    <property type="match status" value="1"/>
</dbReference>
<dbReference type="SUPFAM" id="SSF89817">
    <property type="entry name" value="Mago nashi protein"/>
    <property type="match status" value="1"/>
</dbReference>
<name>MGN_CHICK</name>
<comment type="function">
    <text evidence="1">Required for pre-mRNA splicing as component of the spliceosome. Core component of the exon junction complex (EJC) and also involved in the nonsense-mediated decay (NMD) pathway. The EJC is a dynamic structure consisting of core proteins and several peripheral nuclear and cytoplasmic associated factors that join the complex only transiently either during EJC assembly or during subsequent mRNA metabolism. The EJC marks the position of the exon-exon junction in the mature mRNA for the gene expression machinery and the core components remain bound to spliced mRNAs throughout all stages of mRNA metabolism thereby influencing downstream processes including nuclear mRNA export, subcellular mRNA localization, translation efficiency and nonsense-mediated mRNA decay (NMD).</text>
</comment>
<comment type="subunit">
    <text evidence="1">Core component of the mRNA splicing-dependent exon junction complex (EJC); the core complex contains CASC3, EIF4A3, MAGOH, and RBM8A.</text>
</comment>
<comment type="subcellular location">
    <subcellularLocation>
        <location evidence="1">Nucleus</location>
    </subcellularLocation>
    <subcellularLocation>
        <location evidence="1">Nucleus speckle</location>
    </subcellularLocation>
    <subcellularLocation>
        <location evidence="1">Cytoplasm</location>
    </subcellularLocation>
    <text evidence="1">Travels to the cytoplasm as part of the exon junction complex (EJC) bound to mRNA.</text>
</comment>
<comment type="similarity">
    <text evidence="2">Belongs to the mago nashi family.</text>
</comment>
<organism>
    <name type="scientific">Gallus gallus</name>
    <name type="common">Chicken</name>
    <dbReference type="NCBI Taxonomy" id="9031"/>
    <lineage>
        <taxon>Eukaryota</taxon>
        <taxon>Metazoa</taxon>
        <taxon>Chordata</taxon>
        <taxon>Craniata</taxon>
        <taxon>Vertebrata</taxon>
        <taxon>Euteleostomi</taxon>
        <taxon>Archelosauria</taxon>
        <taxon>Archosauria</taxon>
        <taxon>Dinosauria</taxon>
        <taxon>Saurischia</taxon>
        <taxon>Theropoda</taxon>
        <taxon>Coelurosauria</taxon>
        <taxon>Aves</taxon>
        <taxon>Neognathae</taxon>
        <taxon>Galloanserae</taxon>
        <taxon>Galliformes</taxon>
        <taxon>Phasianidae</taxon>
        <taxon>Phasianinae</taxon>
        <taxon>Gallus</taxon>
    </lineage>
</organism>
<sequence>MASDFYLRYYVGHKGKFGHEFLEFEFRPDGKLRYANNSNYKNDVMIRKEAYVHKSVMEELKRIIDDSEITKEDDALWPPPDRVGRQELEIVIGDEHISFTTSKIGSLIDVNQSKDPEGLRVFYYLVQDLKCLVFSLIGLHFKIKPI</sequence>
<accession>P50594</accession>
<accession>Q8AW85</accession>
<evidence type="ECO:0000250" key="1">
    <source>
        <dbReference type="UniProtKB" id="P61326"/>
    </source>
</evidence>
<evidence type="ECO:0000305" key="2"/>
<protein>
    <recommendedName>
        <fullName>Protein mago nashi homolog</fullName>
    </recommendedName>
</protein>
<keyword id="KW-0963">Cytoplasm</keyword>
<keyword id="KW-0507">mRNA processing</keyword>
<keyword id="KW-0508">mRNA splicing</keyword>
<keyword id="KW-0509">mRNA transport</keyword>
<keyword id="KW-0539">Nucleus</keyword>
<keyword id="KW-1185">Reference proteome</keyword>
<keyword id="KW-0694">RNA-binding</keyword>
<keyword id="KW-0813">Transport</keyword>